<organism>
    <name type="scientific">Rattus norvegicus</name>
    <name type="common">Rat</name>
    <dbReference type="NCBI Taxonomy" id="10116"/>
    <lineage>
        <taxon>Eukaryota</taxon>
        <taxon>Metazoa</taxon>
        <taxon>Chordata</taxon>
        <taxon>Craniata</taxon>
        <taxon>Vertebrata</taxon>
        <taxon>Euteleostomi</taxon>
        <taxon>Mammalia</taxon>
        <taxon>Eutheria</taxon>
        <taxon>Euarchontoglires</taxon>
        <taxon>Glires</taxon>
        <taxon>Rodentia</taxon>
        <taxon>Myomorpha</taxon>
        <taxon>Muroidea</taxon>
        <taxon>Muridae</taxon>
        <taxon>Murinae</taxon>
        <taxon>Rattus</taxon>
    </lineage>
</organism>
<proteinExistence type="evidence at protein level"/>
<feature type="chain" id="PRO_0000317028" description="26S proteasome non-ATPase regulatory subunit 2">
    <location>
        <begin position="1"/>
        <end position="908"/>
    </location>
</feature>
<feature type="repeat" description="PC 1">
    <location>
        <begin position="409"/>
        <end position="442"/>
    </location>
</feature>
<feature type="repeat" description="PC 2">
    <location>
        <begin position="443"/>
        <end position="479"/>
    </location>
</feature>
<feature type="repeat" description="PC 3">
    <location>
        <begin position="480"/>
        <end position="514"/>
    </location>
</feature>
<feature type="repeat" description="PC 4">
    <location>
        <begin position="517"/>
        <end position="551"/>
    </location>
</feature>
<feature type="repeat" description="PC 5">
    <location>
        <begin position="560"/>
        <end position="589"/>
    </location>
</feature>
<feature type="repeat" description="PC 6">
    <location>
        <begin position="692"/>
        <end position="723"/>
    </location>
</feature>
<feature type="repeat" description="PC 7">
    <location>
        <begin position="742"/>
        <end position="757"/>
    </location>
</feature>
<feature type="region of interest" description="Disordered" evidence="3">
    <location>
        <begin position="1"/>
        <end position="51"/>
    </location>
</feature>
<feature type="region of interest" description="Disordered" evidence="3">
    <location>
        <begin position="623"/>
        <end position="645"/>
    </location>
</feature>
<feature type="region of interest" description="Required for interaction with UBLCP1" evidence="1">
    <location>
        <begin position="708"/>
        <end position="903"/>
    </location>
</feature>
<feature type="compositionally biased region" description="Polar residues" evidence="3">
    <location>
        <begin position="10"/>
        <end position="20"/>
    </location>
</feature>
<feature type="compositionally biased region" description="Basic and acidic residues" evidence="3">
    <location>
        <begin position="24"/>
        <end position="51"/>
    </location>
</feature>
<feature type="compositionally biased region" description="Basic and acidic residues" evidence="3">
    <location>
        <begin position="623"/>
        <end position="643"/>
    </location>
</feature>
<feature type="modified residue" description="N-acetylmethionine" evidence="2">
    <location>
        <position position="1"/>
    </location>
</feature>
<feature type="modified residue" description="Phosphothreonine" evidence="2">
    <location>
        <position position="9"/>
    </location>
</feature>
<feature type="modified residue" description="Phosphoserine" evidence="1">
    <location>
        <position position="29"/>
    </location>
</feature>
<feature type="modified residue" description="Phosphoserine" evidence="1">
    <location>
        <position position="147"/>
    </location>
</feature>
<feature type="modified residue" description="Phosphotyrosine" evidence="1">
    <location>
        <position position="194"/>
    </location>
</feature>
<feature type="modified residue" description="Phosphoserine" evidence="5">
    <location>
        <position position="361"/>
    </location>
</feature>
<feature type="modified residue" description="Phosphoserine" evidence="1">
    <location>
        <position position="363"/>
    </location>
</feature>
<feature type="modified residue" description="N6-acetyllysine" evidence="2">
    <location>
        <position position="551"/>
    </location>
</feature>
<name>PSMD2_RAT</name>
<sequence length="908" mass="100188">MEEGGRDKTPVQSQQPSATAPSGADEKSSGKERRDAGEKDKEQELSEEDKQLQDELEMLVERLGEKDTSLYRPALEELRRQIRSSTTSMTSVPKPLKFLRPHYGKLKEIYENMAPGENKCFAADIISVLAMTMSGERECLKYRLVGSQEELASWGHEYVRHLAGEVAKEWQELDDAEKAQREPLLTLVKEIVPYNMAHNAEHEACDLLMEIEQVDMLEKDIDENAYSKVCLYLTSCVNYVPEPENSALLRCALGVFRKFSRFPEALRLALMLNDMELVEDIFTSCKDVVVQKQMAFMLGRHGVFLELSEDVEEYEDLTEIMSNVQLNSNFLALARELDIMEPKVPDDIYKTHLENNRFGGSGSQVDSARMNLASSFVNGFVNAAFGQDKLLTDDGNKWLYKNKDHGMLSAAASLGMILLWDVDGGLTQIDKYLYSSEDYIKSGALLACGIVNSGVRNECDPALALLSDYVLHNSNTMRLGSIFGLGLAYAGSNREDVLTLLLPVMGDSKSSMEVAGVTALACGMIAVGSCNGDVTSTILQTIMEKSETELKDTYARWLPLGLGLNHLGKGEAIEAILAALEVVSEPFRSFANTLVDVCAYAGSGNVLKVQQLLHICSEHFDSKEKEEDKDKKEKKDKDKKEAPADMGAHQGVAVLGIALIAMGEEIGAEMALRTFGHLLRYGEPTLRRAVPLALALISVSNPRLNILDTLSKFSHDADPEVSYNSIFAMGMVGSGTNNARLAAMLRQLAQYHAKDPNNLFMVRLAQGLTHLGKGTLTLCPYHSDRQLMSQVAVAGLLTVLVSFLDVRNIILGKSHYVLYGLVAAMQPRMLVTFDEELRPLPVSVRVGQAVDVVGQAGKPKTITGFQTHTTPVLLAHGERAELATEEFLPVTPILEGFVILRKNPNYNL</sequence>
<evidence type="ECO:0000250" key="1">
    <source>
        <dbReference type="UniProtKB" id="Q13200"/>
    </source>
</evidence>
<evidence type="ECO:0000250" key="2">
    <source>
        <dbReference type="UniProtKB" id="Q8VDM4"/>
    </source>
</evidence>
<evidence type="ECO:0000256" key="3">
    <source>
        <dbReference type="SAM" id="MobiDB-lite"/>
    </source>
</evidence>
<evidence type="ECO:0000305" key="4"/>
<evidence type="ECO:0007744" key="5">
    <source>
    </source>
</evidence>
<keyword id="KW-0002">3D-structure</keyword>
<keyword id="KW-0007">Acetylation</keyword>
<keyword id="KW-0597">Phosphoprotein</keyword>
<keyword id="KW-0647">Proteasome</keyword>
<keyword id="KW-1185">Reference proteome</keyword>
<keyword id="KW-0677">Repeat</keyword>
<dbReference type="EMBL" id="BC099135">
    <property type="protein sequence ID" value="AAH99135.1"/>
    <property type="molecule type" value="mRNA"/>
</dbReference>
<dbReference type="RefSeq" id="NP_001026809.1">
    <property type="nucleotide sequence ID" value="NM_001031639.1"/>
</dbReference>
<dbReference type="PDB" id="6EPC">
    <property type="method" value="EM"/>
    <property type="resolution" value="12.30 A"/>
    <property type="chains" value="Z=1-908"/>
</dbReference>
<dbReference type="PDB" id="6EPD">
    <property type="method" value="EM"/>
    <property type="resolution" value="15.40 A"/>
    <property type="chains" value="Z=1-908"/>
</dbReference>
<dbReference type="PDB" id="6EPE">
    <property type="method" value="EM"/>
    <property type="resolution" value="12.80 A"/>
    <property type="chains" value="Z=1-908"/>
</dbReference>
<dbReference type="PDB" id="6EPF">
    <property type="method" value="EM"/>
    <property type="resolution" value="11.80 A"/>
    <property type="chains" value="Z=1-908"/>
</dbReference>
<dbReference type="PDBsum" id="6EPC"/>
<dbReference type="PDBsum" id="6EPD"/>
<dbReference type="PDBsum" id="6EPE"/>
<dbReference type="PDBsum" id="6EPF"/>
<dbReference type="EMDB" id="EMD-3913"/>
<dbReference type="EMDB" id="EMD-3914"/>
<dbReference type="EMDB" id="EMD-3915"/>
<dbReference type="EMDB" id="EMD-3916"/>
<dbReference type="SMR" id="Q4FZT9"/>
<dbReference type="BioGRID" id="252405">
    <property type="interactions" value="9"/>
</dbReference>
<dbReference type="ComplexPortal" id="CPX-8962">
    <property type="entry name" value="19S proteasome regulatory complex"/>
</dbReference>
<dbReference type="ComplexPortal" id="CPX-8965">
    <property type="entry name" value="30S proteasome complex"/>
</dbReference>
<dbReference type="FunCoup" id="Q4FZT9">
    <property type="interactions" value="3870"/>
</dbReference>
<dbReference type="IntAct" id="Q4FZT9">
    <property type="interactions" value="7"/>
</dbReference>
<dbReference type="MINT" id="Q4FZT9"/>
<dbReference type="STRING" id="10116.ENSRNOP00000002358"/>
<dbReference type="iPTMnet" id="Q4FZT9"/>
<dbReference type="PhosphoSitePlus" id="Q4FZT9"/>
<dbReference type="jPOST" id="Q4FZT9"/>
<dbReference type="PaxDb" id="10116-ENSRNOP00000002358"/>
<dbReference type="Ensembl" id="ENSRNOT00000002358.7">
    <property type="protein sequence ID" value="ENSRNOP00000002358.4"/>
    <property type="gene ID" value="ENSRNOG00000001719.7"/>
</dbReference>
<dbReference type="GeneID" id="287984"/>
<dbReference type="KEGG" id="rno:287984"/>
<dbReference type="AGR" id="RGD:1305752"/>
<dbReference type="CTD" id="5708"/>
<dbReference type="RGD" id="1305752">
    <property type="gene designation" value="Psmd2"/>
</dbReference>
<dbReference type="eggNOG" id="KOG2005">
    <property type="taxonomic scope" value="Eukaryota"/>
</dbReference>
<dbReference type="GeneTree" id="ENSGT00940000153386"/>
<dbReference type="HOGENOM" id="CLU_008705_1_0_1"/>
<dbReference type="InParanoid" id="Q4FZT9"/>
<dbReference type="OMA" id="GTCNGDI"/>
<dbReference type="OrthoDB" id="10252509at2759"/>
<dbReference type="PhylomeDB" id="Q4FZT9"/>
<dbReference type="TreeFam" id="TF105739"/>
<dbReference type="Reactome" id="R-RNO-1169091">
    <property type="pathway name" value="Activation of NF-kappaB in B cells"/>
</dbReference>
<dbReference type="Reactome" id="R-RNO-1234176">
    <property type="pathway name" value="Oxygen-dependent proline hydroxylation of Hypoxia-inducible Factor Alpha"/>
</dbReference>
<dbReference type="Reactome" id="R-RNO-1236978">
    <property type="pathway name" value="Cross-presentation of soluble exogenous antigens (endosomes)"/>
</dbReference>
<dbReference type="Reactome" id="R-RNO-174084">
    <property type="pathway name" value="Autodegradation of Cdh1 by Cdh1:APC/C"/>
</dbReference>
<dbReference type="Reactome" id="R-RNO-174113">
    <property type="pathway name" value="SCF-beta-TrCP mediated degradation of Emi1"/>
</dbReference>
<dbReference type="Reactome" id="R-RNO-174154">
    <property type="pathway name" value="APC/C:Cdc20 mediated degradation of Securin"/>
</dbReference>
<dbReference type="Reactome" id="R-RNO-174178">
    <property type="pathway name" value="APC/C:Cdh1 mediated degradation of Cdc20 and other APC/C:Cdh1 targeted proteins in late mitosis/early G1"/>
</dbReference>
<dbReference type="Reactome" id="R-RNO-174184">
    <property type="pathway name" value="Cdc20:Phospho-APC/C mediated degradation of Cyclin A"/>
</dbReference>
<dbReference type="Reactome" id="R-RNO-187577">
    <property type="pathway name" value="SCF(Skp2)-mediated degradation of p27/p21"/>
</dbReference>
<dbReference type="Reactome" id="R-RNO-195253">
    <property type="pathway name" value="Degradation of beta-catenin by the destruction complex"/>
</dbReference>
<dbReference type="Reactome" id="R-RNO-2467813">
    <property type="pathway name" value="Separation of Sister Chromatids"/>
</dbReference>
<dbReference type="Reactome" id="R-RNO-349425">
    <property type="pathway name" value="Autodegradation of the E3 ubiquitin ligase COP1"/>
</dbReference>
<dbReference type="Reactome" id="R-RNO-350562">
    <property type="pathway name" value="Regulation of ornithine decarboxylase (ODC)"/>
</dbReference>
<dbReference type="Reactome" id="R-RNO-382556">
    <property type="pathway name" value="ABC-family proteins mediated transport"/>
</dbReference>
<dbReference type="Reactome" id="R-RNO-450408">
    <property type="pathway name" value="AUF1 (hnRNP D0) binds and destabilizes mRNA"/>
</dbReference>
<dbReference type="Reactome" id="R-RNO-4608870">
    <property type="pathway name" value="Asymmetric localization of PCP proteins"/>
</dbReference>
<dbReference type="Reactome" id="R-RNO-4641257">
    <property type="pathway name" value="Degradation of AXIN"/>
</dbReference>
<dbReference type="Reactome" id="R-RNO-4641258">
    <property type="pathway name" value="Degradation of DVL"/>
</dbReference>
<dbReference type="Reactome" id="R-RNO-5358346">
    <property type="pathway name" value="Hedgehog ligand biogenesis"/>
</dbReference>
<dbReference type="Reactome" id="R-RNO-5607761">
    <property type="pathway name" value="Dectin-1 mediated noncanonical NF-kB signaling"/>
</dbReference>
<dbReference type="Reactome" id="R-RNO-5610780">
    <property type="pathway name" value="Degradation of GLI1 by the proteasome"/>
</dbReference>
<dbReference type="Reactome" id="R-RNO-5610785">
    <property type="pathway name" value="GLI3 is processed to GLI3R by the proteasome"/>
</dbReference>
<dbReference type="Reactome" id="R-RNO-5632684">
    <property type="pathway name" value="Hedgehog 'on' state"/>
</dbReference>
<dbReference type="Reactome" id="R-RNO-5658442">
    <property type="pathway name" value="Regulation of RAS by GAPs"/>
</dbReference>
<dbReference type="Reactome" id="R-RNO-5668541">
    <property type="pathway name" value="TNFR2 non-canonical NF-kB pathway"/>
</dbReference>
<dbReference type="Reactome" id="R-RNO-5676590">
    <property type="pathway name" value="NIK--&gt;noncanonical NF-kB signaling"/>
</dbReference>
<dbReference type="Reactome" id="R-RNO-5687128">
    <property type="pathway name" value="MAPK6/MAPK4 signaling"/>
</dbReference>
<dbReference type="Reactome" id="R-RNO-5689603">
    <property type="pathway name" value="UCH proteinases"/>
</dbReference>
<dbReference type="Reactome" id="R-RNO-5689880">
    <property type="pathway name" value="Ub-specific processing proteases"/>
</dbReference>
<dbReference type="Reactome" id="R-RNO-6798695">
    <property type="pathway name" value="Neutrophil degranulation"/>
</dbReference>
<dbReference type="Reactome" id="R-RNO-68867">
    <property type="pathway name" value="Assembly of the pre-replicative complex"/>
</dbReference>
<dbReference type="Reactome" id="R-RNO-68949">
    <property type="pathway name" value="Orc1 removal from chromatin"/>
</dbReference>
<dbReference type="Reactome" id="R-RNO-69017">
    <property type="pathway name" value="CDK-mediated phosphorylation and removal of Cdc6"/>
</dbReference>
<dbReference type="Reactome" id="R-RNO-69481">
    <property type="pathway name" value="G2/M Checkpoints"/>
</dbReference>
<dbReference type="Reactome" id="R-RNO-69601">
    <property type="pathway name" value="Ubiquitin Mediated Degradation of Phosphorylated Cdc25A"/>
</dbReference>
<dbReference type="Reactome" id="R-RNO-75815">
    <property type="pathway name" value="Ubiquitin-dependent degradation of Cyclin D"/>
</dbReference>
<dbReference type="Reactome" id="R-RNO-8852276">
    <property type="pathway name" value="The role of GTSE1 in G2/M progression after G2 checkpoint"/>
</dbReference>
<dbReference type="Reactome" id="R-RNO-8854050">
    <property type="pathway name" value="FBXL7 down-regulates AURKA during mitotic entry and in early mitosis"/>
</dbReference>
<dbReference type="Reactome" id="R-RNO-8939236">
    <property type="pathway name" value="RUNX1 regulates transcription of genes involved in differentiation of HSCs"/>
</dbReference>
<dbReference type="Reactome" id="R-RNO-8941858">
    <property type="pathway name" value="Regulation of RUNX3 expression and activity"/>
</dbReference>
<dbReference type="Reactome" id="R-RNO-8948751">
    <property type="pathway name" value="Regulation of PTEN stability and activity"/>
</dbReference>
<dbReference type="Reactome" id="R-RNO-8951664">
    <property type="pathway name" value="Neddylation"/>
</dbReference>
<dbReference type="Reactome" id="R-RNO-9755511">
    <property type="pathway name" value="KEAP1-NFE2L2 pathway"/>
</dbReference>
<dbReference type="Reactome" id="R-RNO-9762114">
    <property type="pathway name" value="GSK3B and BTRC:CUL1-mediated-degradation of NFE2L2"/>
</dbReference>
<dbReference type="Reactome" id="R-RNO-983168">
    <property type="pathway name" value="Antigen processing: Ubiquitination &amp; Proteasome degradation"/>
</dbReference>
<dbReference type="Reactome" id="R-RNO-9907900">
    <property type="pathway name" value="Proteasome assembly"/>
</dbReference>
<dbReference type="PRO" id="PR:Q4FZT9"/>
<dbReference type="Proteomes" id="UP000002494">
    <property type="component" value="Chromosome 11"/>
</dbReference>
<dbReference type="Bgee" id="ENSRNOG00000001719">
    <property type="expression patterns" value="Expressed in skeletal muscle tissue and 19 other cell types or tissues"/>
</dbReference>
<dbReference type="GO" id="GO:0005634">
    <property type="term" value="C:nucleus"/>
    <property type="evidence" value="ECO:0000318"/>
    <property type="project" value="GO_Central"/>
</dbReference>
<dbReference type="GO" id="GO:0022624">
    <property type="term" value="C:proteasome accessory complex"/>
    <property type="evidence" value="ECO:0000250"/>
    <property type="project" value="UniProtKB"/>
</dbReference>
<dbReference type="GO" id="GO:0000502">
    <property type="term" value="C:proteasome complex"/>
    <property type="evidence" value="ECO:0000266"/>
    <property type="project" value="RGD"/>
</dbReference>
<dbReference type="GO" id="GO:0005838">
    <property type="term" value="C:proteasome regulatory particle"/>
    <property type="evidence" value="ECO:0000266"/>
    <property type="project" value="RGD"/>
</dbReference>
<dbReference type="GO" id="GO:0008540">
    <property type="term" value="C:proteasome regulatory particle, base subcomplex"/>
    <property type="evidence" value="ECO:0000318"/>
    <property type="project" value="GO_Central"/>
</dbReference>
<dbReference type="GO" id="GO:0034515">
    <property type="term" value="C:proteasome storage granule"/>
    <property type="evidence" value="ECO:0000318"/>
    <property type="project" value="GO_Central"/>
</dbReference>
<dbReference type="GO" id="GO:0030234">
    <property type="term" value="F:enzyme regulator activity"/>
    <property type="evidence" value="ECO:0007669"/>
    <property type="project" value="InterPro"/>
</dbReference>
<dbReference type="GO" id="GO:0043161">
    <property type="term" value="P:proteasome-mediated ubiquitin-dependent protein catabolic process"/>
    <property type="evidence" value="ECO:0000318"/>
    <property type="project" value="GO_Central"/>
</dbReference>
<dbReference type="GO" id="GO:0042176">
    <property type="term" value="P:regulation of protein catabolic process"/>
    <property type="evidence" value="ECO:0007669"/>
    <property type="project" value="InterPro"/>
</dbReference>
<dbReference type="FunFam" id="1.25.10.10:FF:000026">
    <property type="entry name" value="26S proteasome non-ATPase regulatory subunit 2"/>
    <property type="match status" value="1"/>
</dbReference>
<dbReference type="Gene3D" id="1.25.10.10">
    <property type="entry name" value="Leucine-rich Repeat Variant"/>
    <property type="match status" value="1"/>
</dbReference>
<dbReference type="InterPro" id="IPR016643">
    <property type="entry name" value="26S_Psome_Rpn1"/>
</dbReference>
<dbReference type="InterPro" id="IPR011989">
    <property type="entry name" value="ARM-like"/>
</dbReference>
<dbReference type="InterPro" id="IPR016024">
    <property type="entry name" value="ARM-type_fold"/>
</dbReference>
<dbReference type="InterPro" id="IPR002015">
    <property type="entry name" value="Proteasome/cyclosome_rpt"/>
</dbReference>
<dbReference type="InterPro" id="IPR041433">
    <property type="entry name" value="RPN1_C"/>
</dbReference>
<dbReference type="InterPro" id="IPR040892">
    <property type="entry name" value="RPN1_N"/>
</dbReference>
<dbReference type="PANTHER" id="PTHR10943">
    <property type="entry name" value="26S PROTEASOME NON-ATPASE REGULATORY SUBUNIT"/>
    <property type="match status" value="1"/>
</dbReference>
<dbReference type="PANTHER" id="PTHR10943:SF1">
    <property type="entry name" value="26S PROTEASOME NON-ATPASE REGULATORY SUBUNIT 2"/>
    <property type="match status" value="1"/>
</dbReference>
<dbReference type="Pfam" id="PF01851">
    <property type="entry name" value="PC_rep"/>
    <property type="match status" value="2"/>
</dbReference>
<dbReference type="Pfam" id="PF18051">
    <property type="entry name" value="RPN1_C"/>
    <property type="match status" value="1"/>
</dbReference>
<dbReference type="Pfam" id="PF17781">
    <property type="entry name" value="RPN1_RPN2_N"/>
    <property type="match status" value="1"/>
</dbReference>
<dbReference type="PIRSF" id="PIRSF015965">
    <property type="entry name" value="26S_Psome_Rpn1"/>
    <property type="match status" value="1"/>
</dbReference>
<dbReference type="SUPFAM" id="SSF48371">
    <property type="entry name" value="ARM repeat"/>
    <property type="match status" value="1"/>
</dbReference>
<reference key="1">
    <citation type="journal article" date="2004" name="Genome Res.">
        <title>The status, quality, and expansion of the NIH full-length cDNA project: the Mammalian Gene Collection (MGC).</title>
        <authorList>
            <consortium name="The MGC Project Team"/>
        </authorList>
    </citation>
    <scope>NUCLEOTIDE SEQUENCE [LARGE SCALE MRNA]</scope>
    <source>
        <tissue>Testis</tissue>
    </source>
</reference>
<reference key="2">
    <citation type="journal article" date="2012" name="Nat. Commun.">
        <title>Quantitative maps of protein phosphorylation sites across 14 different rat organs and tissues.</title>
        <authorList>
            <person name="Lundby A."/>
            <person name="Secher A."/>
            <person name="Lage K."/>
            <person name="Nordsborg N.B."/>
            <person name="Dmytriyev A."/>
            <person name="Lundby C."/>
            <person name="Olsen J.V."/>
        </authorList>
    </citation>
    <scope>PHOSPHORYLATION [LARGE SCALE ANALYSIS] AT SER-361</scope>
    <scope>IDENTIFICATION BY MASS SPECTROMETRY [LARGE SCALE ANALYSIS]</scope>
</reference>
<protein>
    <recommendedName>
        <fullName>26S proteasome non-ATPase regulatory subunit 2</fullName>
    </recommendedName>
</protein>
<gene>
    <name type="primary">Psmd2</name>
</gene>
<comment type="function">
    <text evidence="1">Component of the 26S proteasome, a multiprotein complex involved in the ATP-dependent degradation of ubiquitinated proteins. This complex plays a key role in the maintenance of protein homeostasis by removing misfolded or damaged proteins, which could impair cellular functions, and by removing proteins whose functions are no longer required. Therefore, the proteasome participates in numerous cellular processes, including cell cycle progression, apoptosis, or DNA damage repair.</text>
</comment>
<comment type="function">
    <text evidence="1">Binds to the intracellular domain of tumor necrosis factor type 1 receptor. The binding domain of TRAP1 and TRAP2 resides outside the death domain of TNFR1.</text>
</comment>
<comment type="subunit">
    <text evidence="1 2">Component of the 19S proteasome regulatory particle complex. The 26S proteasome consists of a 20S core particle (CP) and two 19S regulatory subunits (RP). The regulatory particle is made of a lid composed of 9 subunits, a base containing 6 ATPases and few additional components including PSMD2 (By similarity). Interacts with RPGRIP1L (By similarity). Interacts with CRY1 in a KDM8-dependent manner (By similarity). Interacts (via C-terminus) with phosphatase UBLCP1 (via ubiquitin-like domain); the interaction recruits UBLCP1 to the 19S regulatory particle where it dephosphorylates 19S subunit PSMC2/RPT1 which impairs PSMC2 ATPase activity and disrupts 26S proteasome assembly (By similarity).</text>
</comment>
<comment type="similarity">
    <text evidence="4">Belongs to the proteasome subunit S2 family.</text>
</comment>
<accession>Q4FZT9</accession>